<comment type="subcellular location">
    <subcellularLocation>
        <location evidence="1">Cell inner membrane</location>
        <topology evidence="1">Multi-pass membrane protein</topology>
    </subcellularLocation>
</comment>
<comment type="similarity">
    <text evidence="1">Belongs to the universal stress protein B family.</text>
</comment>
<accession>Q31VD1</accession>
<protein>
    <recommendedName>
        <fullName evidence="1">Universal stress protein B</fullName>
    </recommendedName>
</protein>
<name>USPB_SHIBS</name>
<keyword id="KW-0997">Cell inner membrane</keyword>
<keyword id="KW-1003">Cell membrane</keyword>
<keyword id="KW-0472">Membrane</keyword>
<keyword id="KW-0812">Transmembrane</keyword>
<keyword id="KW-1133">Transmembrane helix</keyword>
<proteinExistence type="inferred from homology"/>
<sequence>MISTVALFWALCVVCIVNMARYFSSLRALLVVLRNCDPLLYQYVDGGGFFTSHGQPNKQVRLVWYIYAQRYRDHHDDEFIRRCERVRRQFILTSALCGLVVVSLIALMIWH</sequence>
<feature type="chain" id="PRO_1000064879" description="Universal stress protein B">
    <location>
        <begin position="1"/>
        <end position="111"/>
    </location>
</feature>
<feature type="transmembrane region" description="Helical" evidence="1">
    <location>
        <begin position="1"/>
        <end position="21"/>
    </location>
</feature>
<feature type="transmembrane region" description="Helical" evidence="1">
    <location>
        <begin position="90"/>
        <end position="110"/>
    </location>
</feature>
<gene>
    <name evidence="1" type="primary">uspB</name>
    <name type="ordered locus">SBO_3492</name>
</gene>
<reference key="1">
    <citation type="journal article" date="2005" name="Nucleic Acids Res.">
        <title>Genome dynamics and diversity of Shigella species, the etiologic agents of bacillary dysentery.</title>
        <authorList>
            <person name="Yang F."/>
            <person name="Yang J."/>
            <person name="Zhang X."/>
            <person name="Chen L."/>
            <person name="Jiang Y."/>
            <person name="Yan Y."/>
            <person name="Tang X."/>
            <person name="Wang J."/>
            <person name="Xiong Z."/>
            <person name="Dong J."/>
            <person name="Xue Y."/>
            <person name="Zhu Y."/>
            <person name="Xu X."/>
            <person name="Sun L."/>
            <person name="Chen S."/>
            <person name="Nie H."/>
            <person name="Peng J."/>
            <person name="Xu J."/>
            <person name="Wang Y."/>
            <person name="Yuan Z."/>
            <person name="Wen Y."/>
            <person name="Yao Z."/>
            <person name="Shen Y."/>
            <person name="Qiang B."/>
            <person name="Hou Y."/>
            <person name="Yu J."/>
            <person name="Jin Q."/>
        </authorList>
    </citation>
    <scope>NUCLEOTIDE SEQUENCE [LARGE SCALE GENOMIC DNA]</scope>
    <source>
        <strain>Sb227</strain>
    </source>
</reference>
<dbReference type="EMBL" id="CP000036">
    <property type="protein sequence ID" value="ABB67977.1"/>
    <property type="molecule type" value="Genomic_DNA"/>
</dbReference>
<dbReference type="RefSeq" id="WP_000626187.1">
    <property type="nucleotide sequence ID" value="NC_007613.1"/>
</dbReference>
<dbReference type="SMR" id="Q31VD1"/>
<dbReference type="GeneID" id="93778499"/>
<dbReference type="KEGG" id="sbo:SBO_3492"/>
<dbReference type="HOGENOM" id="CLU_151816_0_0_6"/>
<dbReference type="Proteomes" id="UP000007067">
    <property type="component" value="Chromosome"/>
</dbReference>
<dbReference type="GO" id="GO:0005886">
    <property type="term" value="C:plasma membrane"/>
    <property type="evidence" value="ECO:0007669"/>
    <property type="project" value="UniProtKB-SubCell"/>
</dbReference>
<dbReference type="HAMAP" id="MF_01088">
    <property type="entry name" value="UspB"/>
    <property type="match status" value="1"/>
</dbReference>
<dbReference type="InterPro" id="IPR019598">
    <property type="entry name" value="Universal_stress_protein_B"/>
</dbReference>
<dbReference type="NCBIfam" id="NF003435">
    <property type="entry name" value="PRK04960.1"/>
    <property type="match status" value="1"/>
</dbReference>
<dbReference type="Pfam" id="PF10625">
    <property type="entry name" value="UspB"/>
    <property type="match status" value="1"/>
</dbReference>
<organism>
    <name type="scientific">Shigella boydii serotype 4 (strain Sb227)</name>
    <dbReference type="NCBI Taxonomy" id="300268"/>
    <lineage>
        <taxon>Bacteria</taxon>
        <taxon>Pseudomonadati</taxon>
        <taxon>Pseudomonadota</taxon>
        <taxon>Gammaproteobacteria</taxon>
        <taxon>Enterobacterales</taxon>
        <taxon>Enterobacteriaceae</taxon>
        <taxon>Shigella</taxon>
    </lineage>
</organism>
<evidence type="ECO:0000255" key="1">
    <source>
        <dbReference type="HAMAP-Rule" id="MF_01088"/>
    </source>
</evidence>